<keyword id="KW-0328">Glycosyltransferase</keyword>
<keyword id="KW-0441">Lipid A biosynthesis</keyword>
<keyword id="KW-0444">Lipid biosynthesis</keyword>
<keyword id="KW-0443">Lipid metabolism</keyword>
<keyword id="KW-0808">Transferase</keyword>
<feature type="chain" id="PRO_0000255188" description="Lipid-A-disaccharide synthase">
    <location>
        <begin position="1"/>
        <end position="360"/>
    </location>
</feature>
<comment type="function">
    <text evidence="1">Condensation of UDP-2,3-diacylglucosamine and 2,3-diacylglucosamine-1-phosphate to form lipid A disaccharide, a precursor of lipid A, a phosphorylated glycolipid that anchors the lipopolysaccharide to the outer membrane of the cell.</text>
</comment>
<comment type="catalytic activity">
    <reaction evidence="1">
        <text>a lipid X + a UDP-2-N,3-O-bis[(3R)-3-hydroxyacyl]-alpha-D-glucosamine = a lipid A disaccharide + UDP + H(+)</text>
        <dbReference type="Rhea" id="RHEA:67828"/>
        <dbReference type="ChEBI" id="CHEBI:15378"/>
        <dbReference type="ChEBI" id="CHEBI:58223"/>
        <dbReference type="ChEBI" id="CHEBI:137748"/>
        <dbReference type="ChEBI" id="CHEBI:176338"/>
        <dbReference type="ChEBI" id="CHEBI:176343"/>
        <dbReference type="EC" id="2.4.1.182"/>
    </reaction>
</comment>
<comment type="pathway">
    <text evidence="1">Bacterial outer membrane biogenesis; LPS lipid A biosynthesis.</text>
</comment>
<comment type="similarity">
    <text evidence="1">Belongs to the LpxB family.</text>
</comment>
<gene>
    <name evidence="1" type="primary">lpxB</name>
    <name type="ordered locus">HPAG1_0850</name>
</gene>
<proteinExistence type="inferred from homology"/>
<organism>
    <name type="scientific">Helicobacter pylori (strain HPAG1)</name>
    <dbReference type="NCBI Taxonomy" id="357544"/>
    <lineage>
        <taxon>Bacteria</taxon>
        <taxon>Pseudomonadati</taxon>
        <taxon>Campylobacterota</taxon>
        <taxon>Epsilonproteobacteria</taxon>
        <taxon>Campylobacterales</taxon>
        <taxon>Helicobacteraceae</taxon>
        <taxon>Helicobacter</taxon>
    </lineage>
</organism>
<name>LPXB_HELPH</name>
<dbReference type="EC" id="2.4.1.182" evidence="1"/>
<dbReference type="EMBL" id="CP000241">
    <property type="protein sequence ID" value="ABF84917.1"/>
    <property type="molecule type" value="Genomic_DNA"/>
</dbReference>
<dbReference type="RefSeq" id="WP_001142220.1">
    <property type="nucleotide sequence ID" value="NC_008086.1"/>
</dbReference>
<dbReference type="SMR" id="Q1CT05"/>
<dbReference type="CAZy" id="GT19">
    <property type="family name" value="Glycosyltransferase Family 19"/>
</dbReference>
<dbReference type="KEGG" id="hpa:HPAG1_0850"/>
<dbReference type="HOGENOM" id="CLU_036577_3_1_7"/>
<dbReference type="UniPathway" id="UPA00973"/>
<dbReference type="GO" id="GO:0016020">
    <property type="term" value="C:membrane"/>
    <property type="evidence" value="ECO:0007669"/>
    <property type="project" value="GOC"/>
</dbReference>
<dbReference type="GO" id="GO:0008915">
    <property type="term" value="F:lipid-A-disaccharide synthase activity"/>
    <property type="evidence" value="ECO:0007669"/>
    <property type="project" value="UniProtKB-UniRule"/>
</dbReference>
<dbReference type="GO" id="GO:0005543">
    <property type="term" value="F:phospholipid binding"/>
    <property type="evidence" value="ECO:0007669"/>
    <property type="project" value="TreeGrafter"/>
</dbReference>
<dbReference type="GO" id="GO:0009245">
    <property type="term" value="P:lipid A biosynthetic process"/>
    <property type="evidence" value="ECO:0007669"/>
    <property type="project" value="UniProtKB-UniRule"/>
</dbReference>
<dbReference type="HAMAP" id="MF_00392">
    <property type="entry name" value="LpxB"/>
    <property type="match status" value="1"/>
</dbReference>
<dbReference type="InterPro" id="IPR003835">
    <property type="entry name" value="Glyco_trans_19"/>
</dbReference>
<dbReference type="NCBIfam" id="TIGR00215">
    <property type="entry name" value="lpxB"/>
    <property type="match status" value="1"/>
</dbReference>
<dbReference type="PANTHER" id="PTHR30372">
    <property type="entry name" value="LIPID-A-DISACCHARIDE SYNTHASE"/>
    <property type="match status" value="1"/>
</dbReference>
<dbReference type="PANTHER" id="PTHR30372:SF4">
    <property type="entry name" value="LIPID-A-DISACCHARIDE SYNTHASE, MITOCHONDRIAL-RELATED"/>
    <property type="match status" value="1"/>
</dbReference>
<dbReference type="Pfam" id="PF02684">
    <property type="entry name" value="LpxB"/>
    <property type="match status" value="1"/>
</dbReference>
<dbReference type="SUPFAM" id="SSF53756">
    <property type="entry name" value="UDP-Glycosyltransferase/glycogen phosphorylase"/>
    <property type="match status" value="1"/>
</dbReference>
<reference key="1">
    <citation type="journal article" date="2006" name="Proc. Natl. Acad. Sci. U.S.A.">
        <title>The complete genome sequence of a chronic atrophic gastritis Helicobacter pylori strain: evolution during disease progression.</title>
        <authorList>
            <person name="Oh J.D."/>
            <person name="Kling-Baeckhed H."/>
            <person name="Giannakis M."/>
            <person name="Xu J."/>
            <person name="Fulton R.S."/>
            <person name="Fulton L.A."/>
            <person name="Cordum H.S."/>
            <person name="Wang C."/>
            <person name="Elliott G."/>
            <person name="Edwards J."/>
            <person name="Mardis E.R."/>
            <person name="Engstrand L.G."/>
            <person name="Gordon J.I."/>
        </authorList>
    </citation>
    <scope>NUCLEOTIDE SEQUENCE [LARGE SCALE GENOMIC DNA]</scope>
    <source>
        <strain>HPAG1</strain>
    </source>
</reference>
<accession>Q1CT05</accession>
<evidence type="ECO:0000255" key="1">
    <source>
        <dbReference type="HAMAP-Rule" id="MF_00392"/>
    </source>
</evidence>
<protein>
    <recommendedName>
        <fullName evidence="1">Lipid-A-disaccharide synthase</fullName>
        <ecNumber evidence="1">2.4.1.182</ecNumber>
    </recommendedName>
</protein>
<sequence>MPTILVSALEASSNIHLEELRQNLPKDYRFIGVFEGKNALYSPREFSIMGFRDVIGRLGFLLKAHKEMVQLAKQADMVLLMDSSSFNIPLAKKIKKQDPHKKIMYYILPQVWAWKKWRAKSLEKYCDFLGAILPFEVGYYQKKAQYVGHPLLDEIKYYKKDIKGETLVFMPGSRKSEIAKIFPLFVKAAQILEQNEGFKRRVLVVPSFFKGLDLKALYGEDIELFEISYDAHKSLFEAEFAFICSGTATLEAALIGTPFVLAYRAKTMDFLIARMLVNLHYIGLANIFYNALNDETPGLGESQLHPELIQHFLSVEGLLKAYEEMDRERYFKESLRLREYLASGSARKIANEMAFLLNLT</sequence>